<proteinExistence type="inferred from homology"/>
<accession>P55131</accession>
<organism>
    <name type="scientific">Actinobacillus pleuropneumoniae</name>
    <name type="common">Haemophilus pleuropneumoniae</name>
    <dbReference type="NCBI Taxonomy" id="715"/>
    <lineage>
        <taxon>Bacteria</taxon>
        <taxon>Pseudomonadati</taxon>
        <taxon>Pseudomonadota</taxon>
        <taxon>Gammaproteobacteria</taxon>
        <taxon>Pasteurellales</taxon>
        <taxon>Pasteurellaceae</taxon>
        <taxon>Actinobacillus</taxon>
    </lineage>
</organism>
<dbReference type="EMBL" id="X80055">
    <property type="protein sequence ID" value="CAA56358.1"/>
    <property type="molecule type" value="Genomic_DNA"/>
</dbReference>
<dbReference type="EMBL" id="X68815">
    <property type="protein sequence ID" value="CAA48711.1"/>
    <property type="molecule type" value="Genomic_DNA"/>
</dbReference>
<dbReference type="PIR" id="B49219">
    <property type="entry name" value="B49219"/>
</dbReference>
<dbReference type="RefSeq" id="WP_005620396.1">
    <property type="nucleotide sequence ID" value="NZ_UIFY01000002.1"/>
</dbReference>
<dbReference type="SMR" id="P55131"/>
<dbReference type="OrthoDB" id="5664974at2"/>
<dbReference type="GO" id="GO:0005576">
    <property type="term" value="C:extracellular region"/>
    <property type="evidence" value="ECO:0007669"/>
    <property type="project" value="UniProtKB-SubCell"/>
</dbReference>
<dbReference type="GO" id="GO:0020002">
    <property type="term" value="C:host cell plasma membrane"/>
    <property type="evidence" value="ECO:0007669"/>
    <property type="project" value="UniProtKB-SubCell"/>
</dbReference>
<dbReference type="GO" id="GO:0016020">
    <property type="term" value="C:membrane"/>
    <property type="evidence" value="ECO:0007669"/>
    <property type="project" value="UniProtKB-KW"/>
</dbReference>
<dbReference type="GO" id="GO:0005509">
    <property type="term" value="F:calcium ion binding"/>
    <property type="evidence" value="ECO:0007669"/>
    <property type="project" value="InterPro"/>
</dbReference>
<dbReference type="GO" id="GO:0015267">
    <property type="term" value="F:channel activity"/>
    <property type="evidence" value="ECO:0007669"/>
    <property type="project" value="InterPro"/>
</dbReference>
<dbReference type="GO" id="GO:0090729">
    <property type="term" value="F:toxin activity"/>
    <property type="evidence" value="ECO:0007669"/>
    <property type="project" value="UniProtKB-KW"/>
</dbReference>
<dbReference type="GO" id="GO:0031640">
    <property type="term" value="P:killing of cells of another organism"/>
    <property type="evidence" value="ECO:0007669"/>
    <property type="project" value="UniProtKB-KW"/>
</dbReference>
<dbReference type="Gene3D" id="2.150.10.10">
    <property type="entry name" value="Serralysin-like metalloprotease, C-terminal"/>
    <property type="match status" value="2"/>
</dbReference>
<dbReference type="InterPro" id="IPR018511">
    <property type="entry name" value="Hemolysin-typ_Ca-bd_CS"/>
</dbReference>
<dbReference type="InterPro" id="IPR001343">
    <property type="entry name" value="Hemolysn_Ca-bd"/>
</dbReference>
<dbReference type="InterPro" id="IPR013550">
    <property type="entry name" value="RTX_C"/>
</dbReference>
<dbReference type="InterPro" id="IPR018504">
    <property type="entry name" value="RTX_pore_form"/>
</dbReference>
<dbReference type="InterPro" id="IPR050557">
    <property type="entry name" value="RTX_toxin/Mannuronan_C5-epim"/>
</dbReference>
<dbReference type="InterPro" id="IPR003995">
    <property type="entry name" value="RTX_toxin_determinant-A"/>
</dbReference>
<dbReference type="InterPro" id="IPR011049">
    <property type="entry name" value="Serralysin-like_metalloprot_C"/>
</dbReference>
<dbReference type="NCBIfam" id="NF033943">
    <property type="entry name" value="RTX_toxin"/>
    <property type="match status" value="1"/>
</dbReference>
<dbReference type="PANTHER" id="PTHR38340">
    <property type="entry name" value="S-LAYER PROTEIN"/>
    <property type="match status" value="1"/>
</dbReference>
<dbReference type="PANTHER" id="PTHR38340:SF1">
    <property type="entry name" value="S-LAYER PROTEIN"/>
    <property type="match status" value="1"/>
</dbReference>
<dbReference type="Pfam" id="PF00353">
    <property type="entry name" value="HemolysinCabind"/>
    <property type="match status" value="3"/>
</dbReference>
<dbReference type="Pfam" id="PF02382">
    <property type="entry name" value="RTX"/>
    <property type="match status" value="1"/>
</dbReference>
<dbReference type="Pfam" id="PF08339">
    <property type="entry name" value="RTX_C"/>
    <property type="match status" value="1"/>
</dbReference>
<dbReference type="PRINTS" id="PR00313">
    <property type="entry name" value="CABNDNGRPT"/>
</dbReference>
<dbReference type="PRINTS" id="PR01488">
    <property type="entry name" value="RTXTOXINA"/>
</dbReference>
<dbReference type="SUPFAM" id="SSF51120">
    <property type="entry name" value="beta-Roll"/>
    <property type="match status" value="1"/>
</dbReference>
<dbReference type="PROSITE" id="PS00330">
    <property type="entry name" value="HEMOLYSIN_CALCIUM"/>
    <property type="match status" value="3"/>
</dbReference>
<gene>
    <name type="primary">apxIIIA</name>
    <name type="synonym">clyIIIA</name>
    <name type="synonym">ptxA</name>
    <name type="synonym">rtxA</name>
</gene>
<feature type="chain" id="PRO_0000196241" description="RTX-III toxin determinant A from serotype 8">
    <location>
        <begin position="1"/>
        <end position="1052"/>
    </location>
</feature>
<feature type="transmembrane region" description="Helical" evidence="2">
    <location>
        <begin position="248"/>
        <end position="265"/>
    </location>
</feature>
<feature type="transmembrane region" description="Helical" evidence="2">
    <location>
        <begin position="275"/>
        <end position="334"/>
    </location>
</feature>
<feature type="transmembrane region" description="Helical" evidence="2">
    <location>
        <begin position="372"/>
        <end position="418"/>
    </location>
</feature>
<feature type="repeat" description="Hemolysin-type calcium-binding 1">
    <location>
        <begin position="744"/>
        <end position="761"/>
    </location>
</feature>
<feature type="repeat" description="Hemolysin-type calcium-binding 2">
    <location>
        <begin position="762"/>
        <end position="779"/>
    </location>
</feature>
<feature type="repeat" description="Hemolysin-type calcium-binding 3">
    <location>
        <begin position="780"/>
        <end position="797"/>
    </location>
</feature>
<feature type="repeat" description="Hemolysin-type calcium-binding 4">
    <location>
        <begin position="798"/>
        <end position="815"/>
    </location>
</feature>
<feature type="repeat" description="Hemolysin-type calcium-binding 5">
    <location>
        <begin position="826"/>
        <end position="843"/>
    </location>
</feature>
<feature type="repeat" description="Hemolysin-type calcium-binding 6">
    <location>
        <begin position="844"/>
        <end position="861"/>
    </location>
</feature>
<name>RTX32_ACTPL</name>
<evidence type="ECO:0000250" key="1"/>
<evidence type="ECO:0000255" key="2"/>
<evidence type="ECO:0000305" key="3"/>
<keyword id="KW-0106">Calcium</keyword>
<keyword id="KW-0204">Cytolysis</keyword>
<keyword id="KW-1032">Host cell membrane</keyword>
<keyword id="KW-1043">Host membrane</keyword>
<keyword id="KW-0449">Lipoprotein</keyword>
<keyword id="KW-0472">Membrane</keyword>
<keyword id="KW-0564">Palmitate</keyword>
<keyword id="KW-0677">Repeat</keyword>
<keyword id="KW-0964">Secreted</keyword>
<keyword id="KW-0800">Toxin</keyword>
<keyword id="KW-0812">Transmembrane</keyword>
<keyword id="KW-1133">Transmembrane helix</keyword>
<keyword id="KW-0843">Virulence</keyword>
<reference key="1">
    <citation type="journal article" date="1994" name="Infect. Immun.">
        <title>Genetic map of the Actinobacillus pleuropneumoniae RTX-toxin (Apx) operons: characterization of the ApxIII operons.</title>
        <authorList>
            <person name="Jansen R."/>
            <person name="Briaire J."/>
            <person name="van Geel A.B.M."/>
            <person name="Kamp E.M."/>
            <person name="Gielkens A.L.J."/>
            <person name="Smits M.A."/>
        </authorList>
    </citation>
    <scope>NUCLEOTIDE SEQUENCE [GENOMIC DNA]</scope>
    <source>
        <strain>405 / Serotype 8</strain>
    </source>
</reference>
<reference key="2">
    <citation type="journal article" date="1993" name="Infect. Immun.">
        <title>Cloning and characterization of the Actinobacillus pleuropneumoniae-RTX-toxin III (ApxIII) gene.</title>
        <authorList>
            <person name="Jansen R."/>
            <person name="Briaire J."/>
            <person name="Kamp E.M."/>
            <person name="Gielkens A.L.J."/>
            <person name="Smits M.A."/>
        </authorList>
    </citation>
    <scope>NUCLEOTIDE SEQUENCE [GENOMIC DNA]</scope>
    <source>
        <strain>Serotype 8</strain>
    </source>
</reference>
<protein>
    <recommendedName>
        <fullName>RTX-III toxin determinant A from serotype 8</fullName>
    </recommendedName>
    <alternativeName>
        <fullName>APX-IIIA</fullName>
    </alternativeName>
    <alternativeName>
        <fullName>Cytolysin IIIA</fullName>
        <shortName>CLY-IIIA</shortName>
    </alternativeName>
</protein>
<comment type="function">
    <text>Does not have hemolytic activity but shows a strong cytotoxicity towards alveolar macrophages and neutrophils.</text>
</comment>
<comment type="subcellular location">
    <subcellularLocation>
        <location>Secreted</location>
    </subcellularLocation>
    <subcellularLocation>
        <location evidence="3">Host cell membrane</location>
        <topology evidence="3">Multi-pass membrane protein</topology>
    </subcellularLocation>
</comment>
<comment type="domain">
    <text evidence="1">The Gly-rich region is probably involved in binding calcium, which is required for target cell-binding or cytolytic activity.</text>
</comment>
<comment type="domain">
    <text evidence="1">The three transmembrane domains are believed to be involved in pore formation by the cytotoxin.</text>
</comment>
<comment type="PTM">
    <text evidence="1">Palmitoylated by ApxIIIC. The toxin only becomes active when modified (By similarity).</text>
</comment>
<comment type="similarity">
    <text evidence="3">Belongs to the RTX prokaryotic toxin (TC 1.C.11) family.</text>
</comment>
<sequence length="1052" mass="112810">MSTWSSMLADLKKRAEEAKRQAKKGYDVTKNGLQYGVSQAKLQALAAGKAVQKYGNKLVLVIPKEYDGSVGNGFFDLVKAAEELGIQVKYVNRNELEVAHKSLGTADQFLGLTERGLTLFAPQLDQFLQKHSKISNVVGSSTGDAVSKLAKSQTIISGIQSVLGTVLAGINLNEAIISGGSELELAEAGVSLASELVSNIAKGTTTIDAFTTQIQNFGKLVENAKGLGGVGRQLQNISGSALSKTGLGLDIISSLLSGVTASFALANKNASTSTKVAAGFELSNQVIGGITKAVSSYILAQRLAAGLSTTGPAAALIASSISLAISPLAFLRVADNFNRSKEIGEFAERFKKLGYDGDKLLSEFYHEAGTIDASITTISTALSAIAAGTAAASAGALVGAPITLLVTGITGLISGILEFSKQPMLDHVASKIGNKIDEWEKKYGKNYFENGYDARHKAFLEDSFSLLSSFNKQYETERAVLITQQRWDEYIGELAGITGKGDKLSSGKAYVDYFQEGKLLEKKPDDFSKVVFDPTKGEIDISNSQTSTLLKFVTPLLTPGTESRERTQTGKYEYITKLVVKGKDKWVVNGVKDKGAVYDYTNLIQHAHISSSVARGEEYREVRLVSHLGNGNDKVFLAAGSAEIHAGEGHDVVYYDKTDTGLLVIDGTKATEQGRYSVTRELSGATKILREVIKNQKSAVGKREETLEYRDYELTQSGNSNLKAHDELHSVEEIIGSNQRDEFKGSKFRDIFHGADGDDLLNGNDGDDILYGDKGNDELRGDNGNDQLYGGEGNDKLLGGNGNNYLSGGDGNDELQVLGNGFNVLRGGKGDDKLYGSSGSDLLDGGEGNDYLEGGDGSDFYVYRSTSGNHTIYDQGKSSDLDKLYLSDFSFDRLLVEKVDDNLVLRSNESSHNNGVLTIKDWFKEGNKYNHKIEQIVDKNGRKLTAENLGTYFKNAPKADNLLNYATKEDQNESNLSSLKTELSKIITNAGNFGVAKQGNTGINTAALNNEVNKIISSANTFATSQLGGSGMGTLPSTNVNSMMLGNLARAA</sequence>